<proteinExistence type="inferred from homology"/>
<reference key="1">
    <citation type="journal article" date="2000" name="Nucleic Acids Res.">
        <title>Genome sequences of Chlamydia trachomatis MoPn and Chlamydia pneumoniae AR39.</title>
        <authorList>
            <person name="Read T.D."/>
            <person name="Brunham R.C."/>
            <person name="Shen C."/>
            <person name="Gill S.R."/>
            <person name="Heidelberg J.F."/>
            <person name="White O."/>
            <person name="Hickey E.K."/>
            <person name="Peterson J.D."/>
            <person name="Utterback T.R."/>
            <person name="Berry K.J."/>
            <person name="Bass S."/>
            <person name="Linher K.D."/>
            <person name="Weidman J.F."/>
            <person name="Khouri H.M."/>
            <person name="Craven B."/>
            <person name="Bowman C."/>
            <person name="Dodson R.J."/>
            <person name="Gwinn M.L."/>
            <person name="Nelson W.C."/>
            <person name="DeBoy R.T."/>
            <person name="Kolonay J.F."/>
            <person name="McClarty G."/>
            <person name="Salzberg S.L."/>
            <person name="Eisen J.A."/>
            <person name="Fraser C.M."/>
        </authorList>
    </citation>
    <scope>NUCLEOTIDE SEQUENCE [LARGE SCALE GENOMIC DNA]</scope>
    <source>
        <strain>MoPn / Nigg</strain>
    </source>
</reference>
<name>HEMH_CHLMU</name>
<dbReference type="EC" id="4.98.1.1" evidence="1"/>
<dbReference type="EMBL" id="AE002160">
    <property type="protein sequence ID" value="AAF39575.1"/>
    <property type="molecule type" value="Genomic_DNA"/>
</dbReference>
<dbReference type="PIR" id="B81667">
    <property type="entry name" value="B81667"/>
</dbReference>
<dbReference type="SMR" id="Q9PJQ6"/>
<dbReference type="KEGG" id="cmu:TC_0772"/>
<dbReference type="eggNOG" id="COG0276">
    <property type="taxonomic scope" value="Bacteria"/>
</dbReference>
<dbReference type="HOGENOM" id="CLU_018884_1_0_0"/>
<dbReference type="OrthoDB" id="9809741at2"/>
<dbReference type="UniPathway" id="UPA00252">
    <property type="reaction ID" value="UER00325"/>
</dbReference>
<dbReference type="Proteomes" id="UP000000800">
    <property type="component" value="Chromosome"/>
</dbReference>
<dbReference type="GO" id="GO:0005737">
    <property type="term" value="C:cytoplasm"/>
    <property type="evidence" value="ECO:0007669"/>
    <property type="project" value="UniProtKB-SubCell"/>
</dbReference>
<dbReference type="GO" id="GO:0004325">
    <property type="term" value="F:ferrochelatase activity"/>
    <property type="evidence" value="ECO:0007669"/>
    <property type="project" value="UniProtKB-UniRule"/>
</dbReference>
<dbReference type="GO" id="GO:0046872">
    <property type="term" value="F:metal ion binding"/>
    <property type="evidence" value="ECO:0007669"/>
    <property type="project" value="UniProtKB-KW"/>
</dbReference>
<dbReference type="GO" id="GO:0006783">
    <property type="term" value="P:heme biosynthetic process"/>
    <property type="evidence" value="ECO:0007669"/>
    <property type="project" value="UniProtKB-UniRule"/>
</dbReference>
<dbReference type="CDD" id="cd00419">
    <property type="entry name" value="Ferrochelatase_C"/>
    <property type="match status" value="1"/>
</dbReference>
<dbReference type="CDD" id="cd03411">
    <property type="entry name" value="Ferrochelatase_N"/>
    <property type="match status" value="1"/>
</dbReference>
<dbReference type="Gene3D" id="3.40.50.1400">
    <property type="match status" value="2"/>
</dbReference>
<dbReference type="HAMAP" id="MF_00323">
    <property type="entry name" value="Ferrochelatase"/>
    <property type="match status" value="1"/>
</dbReference>
<dbReference type="InterPro" id="IPR001015">
    <property type="entry name" value="Ferrochelatase"/>
</dbReference>
<dbReference type="InterPro" id="IPR019772">
    <property type="entry name" value="Ferrochelatase_AS"/>
</dbReference>
<dbReference type="InterPro" id="IPR033644">
    <property type="entry name" value="Ferrochelatase_C"/>
</dbReference>
<dbReference type="InterPro" id="IPR033659">
    <property type="entry name" value="Ferrochelatase_N"/>
</dbReference>
<dbReference type="NCBIfam" id="TIGR00109">
    <property type="entry name" value="hemH"/>
    <property type="match status" value="1"/>
</dbReference>
<dbReference type="PANTHER" id="PTHR11108">
    <property type="entry name" value="FERROCHELATASE"/>
    <property type="match status" value="1"/>
</dbReference>
<dbReference type="PANTHER" id="PTHR11108:SF1">
    <property type="entry name" value="FERROCHELATASE, MITOCHONDRIAL"/>
    <property type="match status" value="1"/>
</dbReference>
<dbReference type="Pfam" id="PF00762">
    <property type="entry name" value="Ferrochelatase"/>
    <property type="match status" value="1"/>
</dbReference>
<dbReference type="SUPFAM" id="SSF53800">
    <property type="entry name" value="Chelatase"/>
    <property type="match status" value="1"/>
</dbReference>
<dbReference type="PROSITE" id="PS00534">
    <property type="entry name" value="FERROCHELATASE"/>
    <property type="match status" value="1"/>
</dbReference>
<accession>Q9PJQ6</accession>
<evidence type="ECO:0000255" key="1">
    <source>
        <dbReference type="HAMAP-Rule" id="MF_00323"/>
    </source>
</evidence>
<evidence type="ECO:0000305" key="2"/>
<organism>
    <name type="scientific">Chlamydia muridarum (strain MoPn / Nigg)</name>
    <dbReference type="NCBI Taxonomy" id="243161"/>
    <lineage>
        <taxon>Bacteria</taxon>
        <taxon>Pseudomonadati</taxon>
        <taxon>Chlamydiota</taxon>
        <taxon>Chlamydiia</taxon>
        <taxon>Chlamydiales</taxon>
        <taxon>Chlamydiaceae</taxon>
        <taxon>Chlamydia/Chlamydophila group</taxon>
        <taxon>Chlamydia</taxon>
    </lineage>
</organism>
<keyword id="KW-0963">Cytoplasm</keyword>
<keyword id="KW-0350">Heme biosynthesis</keyword>
<keyword id="KW-0408">Iron</keyword>
<keyword id="KW-0456">Lyase</keyword>
<keyword id="KW-0479">Metal-binding</keyword>
<keyword id="KW-0627">Porphyrin biosynthesis</keyword>
<protein>
    <recommendedName>
        <fullName evidence="1">Ferrochelatase</fullName>
        <ecNumber evidence="1">4.98.1.1</ecNumber>
    </recommendedName>
    <alternativeName>
        <fullName evidence="1">Heme synthase</fullName>
    </alternativeName>
    <alternativeName>
        <fullName evidence="1">Protoheme ferro-lyase</fullName>
    </alternativeName>
</protein>
<gene>
    <name evidence="1" type="primary">hemH</name>
    <name type="ordered locus">TC_0772</name>
</gene>
<comment type="function">
    <text evidence="1">Catalyzes the ferrous insertion into protoporphyrin IX.</text>
</comment>
<comment type="catalytic activity">
    <reaction evidence="1">
        <text>heme b + 2 H(+) = protoporphyrin IX + Fe(2+)</text>
        <dbReference type="Rhea" id="RHEA:22584"/>
        <dbReference type="ChEBI" id="CHEBI:15378"/>
        <dbReference type="ChEBI" id="CHEBI:29033"/>
        <dbReference type="ChEBI" id="CHEBI:57306"/>
        <dbReference type="ChEBI" id="CHEBI:60344"/>
        <dbReference type="EC" id="4.98.1.1"/>
    </reaction>
</comment>
<comment type="pathway">
    <text evidence="1">Porphyrin-containing compound metabolism; protoheme biosynthesis; protoheme from protoporphyrin-IX: step 1/1.</text>
</comment>
<comment type="subcellular location">
    <subcellularLocation>
        <location evidence="1">Cytoplasm</location>
    </subcellularLocation>
</comment>
<comment type="similarity">
    <text evidence="1 2">Belongs to the ferrochelatase family.</text>
</comment>
<sequence length="317" mass="36090">MTVYLLANFGGPRISQEIPSFLHALLTDQDVTGGRIPPWLHRPLFSYIAKRRAHRVAEQYAYLGGRSPIFQDTEKLAQNLSQELQAPVISFHRYLTETHQDTLAALRESAGDIIGIPLFPHYTFAVTGSIIRFFLERIPEKPMAWITHFGVHPQFISCMREHIQDCLIAQGIVAEDCFFLFSVHGLPMRHIRLGDPYAKQCQDSFNALIGESEGVLSFQSKFGIGEWLVPSTKEICQSLCTKKRYIVVVPFGFVSDHIETLYEIDHLYVPMLLQRGYRVVRVPAINTSDRWVSALASIVKSSPHETILEPLLMPKRR</sequence>
<feature type="chain" id="PRO_0000175128" description="Ferrochelatase">
    <location>
        <begin position="1"/>
        <end position="317"/>
    </location>
</feature>
<feature type="binding site" evidence="1">
    <location>
        <position position="184"/>
    </location>
    <ligand>
        <name>Fe cation</name>
        <dbReference type="ChEBI" id="CHEBI:24875"/>
    </ligand>
</feature>
<feature type="binding site" evidence="1">
    <location>
        <position position="259"/>
    </location>
    <ligand>
        <name>Fe cation</name>
        <dbReference type="ChEBI" id="CHEBI:24875"/>
    </ligand>
</feature>